<name>TRPA_METRJ</name>
<reference key="1">
    <citation type="submission" date="2008-03" db="EMBL/GenBank/DDBJ databases">
        <title>Complete sequence of chromosome of Methylobacterium radiotolerans JCM 2831.</title>
        <authorList>
            <consortium name="US DOE Joint Genome Institute"/>
            <person name="Copeland A."/>
            <person name="Lucas S."/>
            <person name="Lapidus A."/>
            <person name="Glavina del Rio T."/>
            <person name="Dalin E."/>
            <person name="Tice H."/>
            <person name="Bruce D."/>
            <person name="Goodwin L."/>
            <person name="Pitluck S."/>
            <person name="Kiss H."/>
            <person name="Brettin T."/>
            <person name="Detter J.C."/>
            <person name="Han C."/>
            <person name="Kuske C.R."/>
            <person name="Schmutz J."/>
            <person name="Larimer F."/>
            <person name="Land M."/>
            <person name="Hauser L."/>
            <person name="Kyrpides N."/>
            <person name="Mikhailova N."/>
            <person name="Marx C.J."/>
            <person name="Richardson P."/>
        </authorList>
    </citation>
    <scope>NUCLEOTIDE SEQUENCE [LARGE SCALE GENOMIC DNA]</scope>
    <source>
        <strain>ATCC 27329 / DSM 1819 / JCM 2831 / NBRC 15690 / NCIMB 10815 / 0-1</strain>
    </source>
</reference>
<dbReference type="EC" id="4.2.1.20" evidence="1"/>
<dbReference type="EMBL" id="CP001001">
    <property type="protein sequence ID" value="ACB25360.1"/>
    <property type="molecule type" value="Genomic_DNA"/>
</dbReference>
<dbReference type="RefSeq" id="WP_012320323.1">
    <property type="nucleotide sequence ID" value="NC_010505.1"/>
</dbReference>
<dbReference type="SMR" id="B1LSQ8"/>
<dbReference type="STRING" id="426355.Mrad2831_3382"/>
<dbReference type="GeneID" id="6139430"/>
<dbReference type="KEGG" id="mrd:Mrad2831_3382"/>
<dbReference type="eggNOG" id="COG0159">
    <property type="taxonomic scope" value="Bacteria"/>
</dbReference>
<dbReference type="HOGENOM" id="CLU_016734_0_0_5"/>
<dbReference type="OrthoDB" id="9804578at2"/>
<dbReference type="UniPathway" id="UPA00035">
    <property type="reaction ID" value="UER00044"/>
</dbReference>
<dbReference type="Proteomes" id="UP000006589">
    <property type="component" value="Chromosome"/>
</dbReference>
<dbReference type="GO" id="GO:0005829">
    <property type="term" value="C:cytosol"/>
    <property type="evidence" value="ECO:0007669"/>
    <property type="project" value="TreeGrafter"/>
</dbReference>
<dbReference type="GO" id="GO:0004834">
    <property type="term" value="F:tryptophan synthase activity"/>
    <property type="evidence" value="ECO:0007669"/>
    <property type="project" value="UniProtKB-UniRule"/>
</dbReference>
<dbReference type="CDD" id="cd04724">
    <property type="entry name" value="Tryptophan_synthase_alpha"/>
    <property type="match status" value="1"/>
</dbReference>
<dbReference type="FunFam" id="3.20.20.70:FF:000037">
    <property type="entry name" value="Tryptophan synthase alpha chain"/>
    <property type="match status" value="1"/>
</dbReference>
<dbReference type="Gene3D" id="3.20.20.70">
    <property type="entry name" value="Aldolase class I"/>
    <property type="match status" value="1"/>
</dbReference>
<dbReference type="HAMAP" id="MF_00131">
    <property type="entry name" value="Trp_synth_alpha"/>
    <property type="match status" value="1"/>
</dbReference>
<dbReference type="InterPro" id="IPR013785">
    <property type="entry name" value="Aldolase_TIM"/>
</dbReference>
<dbReference type="InterPro" id="IPR011060">
    <property type="entry name" value="RibuloseP-bd_barrel"/>
</dbReference>
<dbReference type="InterPro" id="IPR002028">
    <property type="entry name" value="Trp_synthase_suA"/>
</dbReference>
<dbReference type="NCBIfam" id="TIGR00262">
    <property type="entry name" value="trpA"/>
    <property type="match status" value="1"/>
</dbReference>
<dbReference type="PANTHER" id="PTHR43406:SF1">
    <property type="entry name" value="TRYPTOPHAN SYNTHASE ALPHA CHAIN, CHLOROPLASTIC"/>
    <property type="match status" value="1"/>
</dbReference>
<dbReference type="PANTHER" id="PTHR43406">
    <property type="entry name" value="TRYPTOPHAN SYNTHASE, ALPHA CHAIN"/>
    <property type="match status" value="1"/>
</dbReference>
<dbReference type="Pfam" id="PF00290">
    <property type="entry name" value="Trp_syntA"/>
    <property type="match status" value="1"/>
</dbReference>
<dbReference type="SUPFAM" id="SSF51366">
    <property type="entry name" value="Ribulose-phoshate binding barrel"/>
    <property type="match status" value="1"/>
</dbReference>
<evidence type="ECO:0000255" key="1">
    <source>
        <dbReference type="HAMAP-Rule" id="MF_00131"/>
    </source>
</evidence>
<organism>
    <name type="scientific">Methylobacterium radiotolerans (strain ATCC 27329 / DSM 1819 / JCM 2831 / NBRC 15690 / NCIMB 10815 / 0-1)</name>
    <dbReference type="NCBI Taxonomy" id="426355"/>
    <lineage>
        <taxon>Bacteria</taxon>
        <taxon>Pseudomonadati</taxon>
        <taxon>Pseudomonadota</taxon>
        <taxon>Alphaproteobacteria</taxon>
        <taxon>Hyphomicrobiales</taxon>
        <taxon>Methylobacteriaceae</taxon>
        <taxon>Methylobacterium</taxon>
    </lineage>
</organism>
<keyword id="KW-0028">Amino-acid biosynthesis</keyword>
<keyword id="KW-0057">Aromatic amino acid biosynthesis</keyword>
<keyword id="KW-0456">Lyase</keyword>
<keyword id="KW-0822">Tryptophan biosynthesis</keyword>
<gene>
    <name evidence="1" type="primary">trpA</name>
    <name type="ordered locus">Mrad2831_3382</name>
</gene>
<accession>B1LSQ8</accession>
<proteinExistence type="inferred from homology"/>
<sequence length="279" mass="28747">MPSRIDATFARARAENRSVLVTYVMSGDPDPETSLEVLKALPGAGADILEFGLPFTDPMADGPAIQAAGLRALKAGQTVSGTLDLVRRFRAGNDTTPVVLMGYYNPIHTYGVDRFLDDAVAAGVDGLIVVDLPPEEDAELCLPALGKGLAFIRLATPTTDERRLPAVLANTAGFVYYVSITGITGTATPDFGKVSEAVARIRRHTDLPVVVGFGVKTGAHAAAIAKGADGVVVGSALVDALVRSLDGEGRPQAGSVGAVTELVRELAAGVRSAGVGRAA</sequence>
<protein>
    <recommendedName>
        <fullName evidence="1">Tryptophan synthase alpha chain</fullName>
        <ecNumber evidence="1">4.2.1.20</ecNumber>
    </recommendedName>
</protein>
<feature type="chain" id="PRO_1000095730" description="Tryptophan synthase alpha chain">
    <location>
        <begin position="1"/>
        <end position="279"/>
    </location>
</feature>
<feature type="active site" description="Proton acceptor" evidence="1">
    <location>
        <position position="50"/>
    </location>
</feature>
<feature type="active site" description="Proton acceptor" evidence="1">
    <location>
        <position position="61"/>
    </location>
</feature>
<comment type="function">
    <text evidence="1">The alpha subunit is responsible for the aldol cleavage of indoleglycerol phosphate to indole and glyceraldehyde 3-phosphate.</text>
</comment>
<comment type="catalytic activity">
    <reaction evidence="1">
        <text>(1S,2R)-1-C-(indol-3-yl)glycerol 3-phosphate + L-serine = D-glyceraldehyde 3-phosphate + L-tryptophan + H2O</text>
        <dbReference type="Rhea" id="RHEA:10532"/>
        <dbReference type="ChEBI" id="CHEBI:15377"/>
        <dbReference type="ChEBI" id="CHEBI:33384"/>
        <dbReference type="ChEBI" id="CHEBI:57912"/>
        <dbReference type="ChEBI" id="CHEBI:58866"/>
        <dbReference type="ChEBI" id="CHEBI:59776"/>
        <dbReference type="EC" id="4.2.1.20"/>
    </reaction>
</comment>
<comment type="pathway">
    <text evidence="1">Amino-acid biosynthesis; L-tryptophan biosynthesis; L-tryptophan from chorismate: step 5/5.</text>
</comment>
<comment type="subunit">
    <text evidence="1">Tetramer of two alpha and two beta chains.</text>
</comment>
<comment type="similarity">
    <text evidence="1">Belongs to the TrpA family.</text>
</comment>